<dbReference type="EMBL" id="AF525932">
    <property type="protein sequence ID" value="AAP47225.1"/>
    <property type="molecule type" value="mRNA"/>
</dbReference>
<dbReference type="EMBL" id="AY621329">
    <property type="protein sequence ID" value="AAT51868.1"/>
    <property type="molecule type" value="mRNA"/>
</dbReference>
<dbReference type="EMBL" id="AY358708">
    <property type="protein sequence ID" value="AAQ89071.1"/>
    <property type="molecule type" value="mRNA"/>
</dbReference>
<dbReference type="EMBL" id="EF426755">
    <property type="protein sequence ID" value="ABR09864.1"/>
    <property type="molecule type" value="mRNA"/>
</dbReference>
<dbReference type="EMBL" id="AL034548">
    <property type="status" value="NOT_ANNOTATED_CDS"/>
    <property type="molecule type" value="Genomic_DNA"/>
</dbReference>
<dbReference type="EMBL" id="BC137292">
    <property type="protein sequence ID" value="AAI37293.1"/>
    <property type="molecule type" value="mRNA"/>
</dbReference>
<dbReference type="EMBL" id="BC137293">
    <property type="protein sequence ID" value="AAI37294.1"/>
    <property type="molecule type" value="mRNA"/>
</dbReference>
<dbReference type="CCDS" id="CCDS12993.1"/>
<dbReference type="RefSeq" id="NP_997352.1">
    <property type="nucleotide sequence ID" value="NM_207469.3"/>
</dbReference>
<dbReference type="BioGRID" id="134777">
    <property type="interactions" value="3"/>
</dbReference>
<dbReference type="FunCoup" id="Q7Z7B7">
    <property type="interactions" value="1"/>
</dbReference>
<dbReference type="IntAct" id="Q7Z7B7">
    <property type="interactions" value="1"/>
</dbReference>
<dbReference type="STRING" id="9606.ENSP00000371813"/>
<dbReference type="BioMuta" id="DEFB132"/>
<dbReference type="DMDM" id="61212742"/>
<dbReference type="MassIVE" id="Q7Z7B7"/>
<dbReference type="PaxDb" id="9606-ENSP00000371813"/>
<dbReference type="PeptideAtlas" id="Q7Z7B7"/>
<dbReference type="ProteomicsDB" id="69512"/>
<dbReference type="Antibodypedia" id="51080">
    <property type="antibodies" value="83 antibodies from 16 providers"/>
</dbReference>
<dbReference type="DNASU" id="400830"/>
<dbReference type="Ensembl" id="ENST00000382376.4">
    <property type="protein sequence ID" value="ENSP00000371813.3"/>
    <property type="gene ID" value="ENSG00000186458.5"/>
</dbReference>
<dbReference type="GeneID" id="400830"/>
<dbReference type="KEGG" id="hsa:400830"/>
<dbReference type="MANE-Select" id="ENST00000382376.4">
    <property type="protein sequence ID" value="ENSP00000371813.3"/>
    <property type="RefSeq nucleotide sequence ID" value="NM_207469.3"/>
    <property type="RefSeq protein sequence ID" value="NP_997352.1"/>
</dbReference>
<dbReference type="UCSC" id="uc002wdb.4">
    <property type="organism name" value="human"/>
</dbReference>
<dbReference type="AGR" id="HGNC:33806"/>
<dbReference type="CTD" id="400830"/>
<dbReference type="DisGeNET" id="400830"/>
<dbReference type="GeneCards" id="DEFB132"/>
<dbReference type="HGNC" id="HGNC:33806">
    <property type="gene designation" value="DEFB132"/>
</dbReference>
<dbReference type="HPA" id="ENSG00000186458">
    <property type="expression patterns" value="Tissue enriched (epididymis)"/>
</dbReference>
<dbReference type="neXtProt" id="NX_Q7Z7B7"/>
<dbReference type="OpenTargets" id="ENSG00000186458"/>
<dbReference type="PharmGKB" id="PA162383557"/>
<dbReference type="VEuPathDB" id="HostDB:ENSG00000186458"/>
<dbReference type="eggNOG" id="ENOG502TE15">
    <property type="taxonomic scope" value="Eukaryota"/>
</dbReference>
<dbReference type="GeneTree" id="ENSGT00940000165094"/>
<dbReference type="HOGENOM" id="CLU_181906_0_0_1"/>
<dbReference type="InParanoid" id="Q7Z7B7"/>
<dbReference type="OMA" id="NASRKCC"/>
<dbReference type="OrthoDB" id="9533508at2759"/>
<dbReference type="PAN-GO" id="Q7Z7B7">
    <property type="GO annotations" value="1 GO annotation based on evolutionary models"/>
</dbReference>
<dbReference type="PhylomeDB" id="Q7Z7B7"/>
<dbReference type="PathwayCommons" id="Q7Z7B7"/>
<dbReference type="Reactome" id="R-HSA-1461957">
    <property type="pathway name" value="Beta defensins"/>
</dbReference>
<dbReference type="Reactome" id="R-HSA-1461973">
    <property type="pathway name" value="Defensins"/>
</dbReference>
<dbReference type="SignaLink" id="Q7Z7B7"/>
<dbReference type="BioGRID-ORCS" id="400830">
    <property type="hits" value="12 hits in 1137 CRISPR screens"/>
</dbReference>
<dbReference type="GenomeRNAi" id="400830"/>
<dbReference type="Pharos" id="Q7Z7B7">
    <property type="development level" value="Tdark"/>
</dbReference>
<dbReference type="PRO" id="PR:Q7Z7B7"/>
<dbReference type="Proteomes" id="UP000005640">
    <property type="component" value="Chromosome 20"/>
</dbReference>
<dbReference type="RNAct" id="Q7Z7B7">
    <property type="molecule type" value="protein"/>
</dbReference>
<dbReference type="Bgee" id="ENSG00000186458">
    <property type="expression patterns" value="Expressed in corpus epididymis and 41 other cell types or tissues"/>
</dbReference>
<dbReference type="GO" id="GO:0005615">
    <property type="term" value="C:extracellular space"/>
    <property type="evidence" value="ECO:0000314"/>
    <property type="project" value="UniProtKB"/>
</dbReference>
<dbReference type="GO" id="GO:0061827">
    <property type="term" value="C:sperm head"/>
    <property type="evidence" value="ECO:0000314"/>
    <property type="project" value="UniProtKB"/>
</dbReference>
<dbReference type="GO" id="GO:0050829">
    <property type="term" value="P:defense response to Gram-negative bacterium"/>
    <property type="evidence" value="ECO:0000305"/>
    <property type="project" value="UniProtKB"/>
</dbReference>
<dbReference type="GO" id="GO:0045087">
    <property type="term" value="P:innate immune response"/>
    <property type="evidence" value="ECO:0007669"/>
    <property type="project" value="InterPro"/>
</dbReference>
<dbReference type="GO" id="GO:0031640">
    <property type="term" value="P:killing of cells of another organism"/>
    <property type="evidence" value="ECO:0000314"/>
    <property type="project" value="UniProtKB"/>
</dbReference>
<dbReference type="InterPro" id="IPR050544">
    <property type="entry name" value="Beta-defensin"/>
</dbReference>
<dbReference type="InterPro" id="IPR025933">
    <property type="entry name" value="Beta_defensin_dom"/>
</dbReference>
<dbReference type="PANTHER" id="PTHR15001:SF3">
    <property type="entry name" value="BETA-DEFENSIN 123"/>
    <property type="match status" value="1"/>
</dbReference>
<dbReference type="PANTHER" id="PTHR15001">
    <property type="entry name" value="BETA-DEFENSIN 123-RELATED"/>
    <property type="match status" value="1"/>
</dbReference>
<dbReference type="Pfam" id="PF13841">
    <property type="entry name" value="Defensin_beta_2"/>
    <property type="match status" value="1"/>
</dbReference>
<reference key="1">
    <citation type="journal article" date="2003" name="Genomics">
        <title>Distribution of new human beta-defensin genes clustered on chromosome 20 in functionally different segments of epididymis.</title>
        <authorList>
            <person name="Rodriguez-Jimenez F.-J."/>
            <person name="Krause A."/>
            <person name="Schulz S."/>
            <person name="Forssmann W.-G."/>
            <person name="Conejo-Garcia J.-R."/>
            <person name="Schreeb R."/>
            <person name="Motzkus D."/>
        </authorList>
    </citation>
    <scope>NUCLEOTIDE SEQUENCE [MRNA]</scope>
    <source>
        <tissue>Testis</tissue>
    </source>
</reference>
<reference key="2">
    <citation type="submission" date="2004-05" db="EMBL/GenBank/DDBJ databases">
        <title>Genome-wide analysis of rat beta-defensins: evidence for the existence of four syntenic defensin gene clusters in mammals.</title>
        <authorList>
            <person name="Patil A."/>
            <person name="Zhang G."/>
        </authorList>
    </citation>
    <scope>NUCLEOTIDE SEQUENCE [MRNA]</scope>
</reference>
<reference key="3">
    <citation type="journal article" date="2003" name="Genome Res.">
        <title>The secreted protein discovery initiative (SPDI), a large-scale effort to identify novel human secreted and transmembrane proteins: a bioinformatics assessment.</title>
        <authorList>
            <person name="Clark H.F."/>
            <person name="Gurney A.L."/>
            <person name="Abaya E."/>
            <person name="Baker K."/>
            <person name="Baldwin D.T."/>
            <person name="Brush J."/>
            <person name="Chen J."/>
            <person name="Chow B."/>
            <person name="Chui C."/>
            <person name="Crowley C."/>
            <person name="Currell B."/>
            <person name="Deuel B."/>
            <person name="Dowd P."/>
            <person name="Eaton D."/>
            <person name="Foster J.S."/>
            <person name="Grimaldi C."/>
            <person name="Gu Q."/>
            <person name="Hass P.E."/>
            <person name="Heldens S."/>
            <person name="Huang A."/>
            <person name="Kim H.S."/>
            <person name="Klimowski L."/>
            <person name="Jin Y."/>
            <person name="Johnson S."/>
            <person name="Lee J."/>
            <person name="Lewis L."/>
            <person name="Liao D."/>
            <person name="Mark M.R."/>
            <person name="Robbie E."/>
            <person name="Sanchez C."/>
            <person name="Schoenfeld J."/>
            <person name="Seshagiri S."/>
            <person name="Simmons L."/>
            <person name="Singh J."/>
            <person name="Smith V."/>
            <person name="Stinson J."/>
            <person name="Vagts A."/>
            <person name="Vandlen R.L."/>
            <person name="Watanabe C."/>
            <person name="Wieand D."/>
            <person name="Woods K."/>
            <person name="Xie M.-H."/>
            <person name="Yansura D.G."/>
            <person name="Yi S."/>
            <person name="Yu G."/>
            <person name="Yuan J."/>
            <person name="Zhang M."/>
            <person name="Zhang Z."/>
            <person name="Goddard A.D."/>
            <person name="Wood W.I."/>
            <person name="Godowski P.J."/>
            <person name="Gray A.M."/>
        </authorList>
    </citation>
    <scope>NUCLEOTIDE SEQUENCE [LARGE SCALE MRNA]</scope>
</reference>
<reference key="4">
    <citation type="journal article" date="2008" name="DNA Res.">
        <title>Transcriptome analysis of a cDNA library from adult human epididymis.</title>
        <authorList>
            <person name="Li J.Y."/>
            <person name="Wang H.Y."/>
            <person name="Liu J."/>
            <person name="Liu Q."/>
            <person name="Zhang J.S."/>
            <person name="Wan F.C."/>
            <person name="Liu F.J."/>
            <person name="Jin S.H."/>
            <person name="Zhang Y.L."/>
        </authorList>
    </citation>
    <scope>NUCLEOTIDE SEQUENCE [LARGE SCALE MRNA]</scope>
    <source>
        <tissue>Epididymis</tissue>
    </source>
</reference>
<reference key="5">
    <citation type="journal article" date="2001" name="Nature">
        <title>The DNA sequence and comparative analysis of human chromosome 20.</title>
        <authorList>
            <person name="Deloukas P."/>
            <person name="Matthews L.H."/>
            <person name="Ashurst J.L."/>
            <person name="Burton J."/>
            <person name="Gilbert J.G.R."/>
            <person name="Jones M."/>
            <person name="Stavrides G."/>
            <person name="Almeida J.P."/>
            <person name="Babbage A.K."/>
            <person name="Bagguley C.L."/>
            <person name="Bailey J."/>
            <person name="Barlow K.F."/>
            <person name="Bates K.N."/>
            <person name="Beard L.M."/>
            <person name="Beare D.M."/>
            <person name="Beasley O.P."/>
            <person name="Bird C.P."/>
            <person name="Blakey S.E."/>
            <person name="Bridgeman A.M."/>
            <person name="Brown A.J."/>
            <person name="Buck D."/>
            <person name="Burrill W.D."/>
            <person name="Butler A.P."/>
            <person name="Carder C."/>
            <person name="Carter N.P."/>
            <person name="Chapman J.C."/>
            <person name="Clamp M."/>
            <person name="Clark G."/>
            <person name="Clark L.N."/>
            <person name="Clark S.Y."/>
            <person name="Clee C.M."/>
            <person name="Clegg S."/>
            <person name="Cobley V.E."/>
            <person name="Collier R.E."/>
            <person name="Connor R.E."/>
            <person name="Corby N.R."/>
            <person name="Coulson A."/>
            <person name="Coville G.J."/>
            <person name="Deadman R."/>
            <person name="Dhami P.D."/>
            <person name="Dunn M."/>
            <person name="Ellington A.G."/>
            <person name="Frankland J.A."/>
            <person name="Fraser A."/>
            <person name="French L."/>
            <person name="Garner P."/>
            <person name="Grafham D.V."/>
            <person name="Griffiths C."/>
            <person name="Griffiths M.N.D."/>
            <person name="Gwilliam R."/>
            <person name="Hall R.E."/>
            <person name="Hammond S."/>
            <person name="Harley J.L."/>
            <person name="Heath P.D."/>
            <person name="Ho S."/>
            <person name="Holden J.L."/>
            <person name="Howden P.J."/>
            <person name="Huckle E."/>
            <person name="Hunt A.R."/>
            <person name="Hunt S.E."/>
            <person name="Jekosch K."/>
            <person name="Johnson C.M."/>
            <person name="Johnson D."/>
            <person name="Kay M.P."/>
            <person name="Kimberley A.M."/>
            <person name="King A."/>
            <person name="Knights A."/>
            <person name="Laird G.K."/>
            <person name="Lawlor S."/>
            <person name="Lehvaeslaiho M.H."/>
            <person name="Leversha M.A."/>
            <person name="Lloyd C."/>
            <person name="Lloyd D.M."/>
            <person name="Lovell J.D."/>
            <person name="Marsh V.L."/>
            <person name="Martin S.L."/>
            <person name="McConnachie L.J."/>
            <person name="McLay K."/>
            <person name="McMurray A.A."/>
            <person name="Milne S.A."/>
            <person name="Mistry D."/>
            <person name="Moore M.J.F."/>
            <person name="Mullikin J.C."/>
            <person name="Nickerson T."/>
            <person name="Oliver K."/>
            <person name="Parker A."/>
            <person name="Patel R."/>
            <person name="Pearce T.A.V."/>
            <person name="Peck A.I."/>
            <person name="Phillimore B.J.C.T."/>
            <person name="Prathalingam S.R."/>
            <person name="Plumb R.W."/>
            <person name="Ramsay H."/>
            <person name="Rice C.M."/>
            <person name="Ross M.T."/>
            <person name="Scott C.E."/>
            <person name="Sehra H.K."/>
            <person name="Shownkeen R."/>
            <person name="Sims S."/>
            <person name="Skuce C.D."/>
            <person name="Smith M.L."/>
            <person name="Soderlund C."/>
            <person name="Steward C.A."/>
            <person name="Sulston J.E."/>
            <person name="Swann R.M."/>
            <person name="Sycamore N."/>
            <person name="Taylor R."/>
            <person name="Tee L."/>
            <person name="Thomas D.W."/>
            <person name="Thorpe A."/>
            <person name="Tracey A."/>
            <person name="Tromans A.C."/>
            <person name="Vaudin M."/>
            <person name="Wall M."/>
            <person name="Wallis J.M."/>
            <person name="Whitehead S.L."/>
            <person name="Whittaker P."/>
            <person name="Willey D.L."/>
            <person name="Williams L."/>
            <person name="Williams S.A."/>
            <person name="Wilming L."/>
            <person name="Wray P.W."/>
            <person name="Hubbard T."/>
            <person name="Durbin R.M."/>
            <person name="Bentley D.R."/>
            <person name="Beck S."/>
            <person name="Rogers J."/>
        </authorList>
    </citation>
    <scope>NUCLEOTIDE SEQUENCE [LARGE SCALE GENOMIC DNA]</scope>
</reference>
<reference key="6">
    <citation type="journal article" date="2004" name="Genome Res.">
        <title>The status, quality, and expansion of the NIH full-length cDNA project: the Mammalian Gene Collection (MGC).</title>
        <authorList>
            <consortium name="The MGC Project Team"/>
        </authorList>
    </citation>
    <scope>NUCLEOTIDE SEQUENCE [LARGE SCALE MRNA]</scope>
</reference>
<keyword id="KW-0044">Antibiotic</keyword>
<keyword id="KW-0929">Antimicrobial</keyword>
<keyword id="KW-0211">Defensin</keyword>
<keyword id="KW-1015">Disulfide bond</keyword>
<keyword id="KW-1267">Proteomics identification</keyword>
<keyword id="KW-1185">Reference proteome</keyword>
<keyword id="KW-0964">Secreted</keyword>
<keyword id="KW-0732">Signal</keyword>
<evidence type="ECO:0000250" key="1"/>
<evidence type="ECO:0000255" key="2"/>
<evidence type="ECO:0000256" key="3">
    <source>
        <dbReference type="SAM" id="MobiDB-lite"/>
    </source>
</evidence>
<evidence type="ECO:0000305" key="4"/>
<comment type="function">
    <text evidence="4">Has antibacterial activity.</text>
</comment>
<comment type="interaction">
    <interactant intactId="EBI-17250048">
        <id>Q7Z7B7</id>
    </interactant>
    <interactant intactId="EBI-12142257">
        <id>Q8TBE3</id>
        <label>FNDC9</label>
    </interactant>
    <organismsDiffer>false</organismsDiffer>
    <experiments>3</experiments>
</comment>
<comment type="subcellular location">
    <subcellularLocation>
        <location evidence="4">Secreted</location>
    </subcellularLocation>
</comment>
<comment type="similarity">
    <text evidence="4">Belongs to the beta-defensin family.</text>
</comment>
<comment type="caution">
    <text evidence="4">Was termed (Ref.2) DEFB133.</text>
</comment>
<protein>
    <recommendedName>
        <fullName>Beta-defensin 132</fullName>
    </recommendedName>
    <alternativeName>
        <fullName>Beta-defensin 32</fullName>
        <shortName>BD-32</shortName>
        <shortName>DEFB-32</shortName>
    </alternativeName>
    <alternativeName>
        <fullName>Defensin HEL-75</fullName>
    </alternativeName>
    <alternativeName>
        <fullName>Defensin, beta 132</fullName>
    </alternativeName>
</protein>
<feature type="signal peptide" evidence="2">
    <location>
        <begin position="1"/>
        <end position="22"/>
    </location>
</feature>
<feature type="chain" id="PRO_0000007007" description="Beta-defensin 132">
    <location>
        <begin position="23"/>
        <end position="95"/>
    </location>
</feature>
<feature type="region of interest" description="Disordered" evidence="3">
    <location>
        <begin position="74"/>
        <end position="95"/>
    </location>
</feature>
<feature type="compositionally biased region" description="Basic residues" evidence="3">
    <location>
        <begin position="76"/>
        <end position="87"/>
    </location>
</feature>
<feature type="disulfide bond" evidence="1">
    <location>
        <begin position="27"/>
        <end position="55"/>
    </location>
</feature>
<feature type="disulfide bond" evidence="1">
    <location>
        <begin position="35"/>
        <end position="49"/>
    </location>
</feature>
<feature type="disulfide bond" evidence="1">
    <location>
        <begin position="39"/>
        <end position="56"/>
    </location>
</feature>
<name>DB132_HUMAN</name>
<organism>
    <name type="scientific">Homo sapiens</name>
    <name type="common">Human</name>
    <dbReference type="NCBI Taxonomy" id="9606"/>
    <lineage>
        <taxon>Eukaryota</taxon>
        <taxon>Metazoa</taxon>
        <taxon>Chordata</taxon>
        <taxon>Craniata</taxon>
        <taxon>Vertebrata</taxon>
        <taxon>Euteleostomi</taxon>
        <taxon>Mammalia</taxon>
        <taxon>Eutheria</taxon>
        <taxon>Euarchontoglires</taxon>
        <taxon>Primates</taxon>
        <taxon>Haplorrhini</taxon>
        <taxon>Catarrhini</taxon>
        <taxon>Hominidae</taxon>
        <taxon>Homo</taxon>
    </lineage>
</organism>
<proteinExistence type="evidence at protein level"/>
<accession>Q7Z7B7</accession>
<accession>B2RP72</accession>
<accession>Q4QY40</accession>
<sequence>MKFLLLVLAALGFLTQVIPASAGGSKCVSNTPGYCRTCCHWGETALFMCNASRKCCISYSFLPKPDLPQLIGNHWQSRRRNTQRKDKKQQTTVTS</sequence>
<gene>
    <name type="primary">DEFB132</name>
    <name type="synonym">DEFB32</name>
    <name type="ORF">UNQ827/PRO1754</name>
</gene>